<dbReference type="EC" id="2.3.1.22" evidence="1"/>
<dbReference type="EMBL" id="AF384163">
    <property type="protein sequence ID" value="AAK84178.1"/>
    <property type="molecule type" value="mRNA"/>
</dbReference>
<dbReference type="EMBL" id="AC104772">
    <property type="protein sequence ID" value="AAX81987.1"/>
    <property type="status" value="ALT_SEQ"/>
    <property type="molecule type" value="Genomic_DNA"/>
</dbReference>
<dbReference type="EMBL" id="BN000154">
    <property type="protein sequence ID" value="CAD89265.1"/>
    <property type="molecule type" value="mRNA"/>
</dbReference>
<dbReference type="CCDS" id="CCDS46524.1"/>
<dbReference type="RefSeq" id="NP_477513.2">
    <property type="nucleotide sequence ID" value="NM_058165.3"/>
</dbReference>
<dbReference type="BioGRID" id="125495">
    <property type="interactions" value="14"/>
</dbReference>
<dbReference type="FunCoup" id="Q96PD6">
    <property type="interactions" value="232"/>
</dbReference>
<dbReference type="IntAct" id="Q96PD6">
    <property type="interactions" value="1"/>
</dbReference>
<dbReference type="STRING" id="9606.ENSP00000406674"/>
<dbReference type="GlyCosmos" id="Q96PD6">
    <property type="glycosylation" value="3 sites, No reported glycans"/>
</dbReference>
<dbReference type="GlyGen" id="Q96PD6">
    <property type="glycosylation" value="3 sites"/>
</dbReference>
<dbReference type="iPTMnet" id="Q96PD6"/>
<dbReference type="PhosphoSitePlus" id="Q96PD6"/>
<dbReference type="BioMuta" id="MOGAT1"/>
<dbReference type="DMDM" id="292495019"/>
<dbReference type="jPOST" id="Q96PD6"/>
<dbReference type="PaxDb" id="9606-ENSP00000406674"/>
<dbReference type="Antibodypedia" id="34362">
    <property type="antibodies" value="102 antibodies from 20 providers"/>
</dbReference>
<dbReference type="DNASU" id="116255"/>
<dbReference type="Ensembl" id="ENST00000446656.4">
    <property type="protein sequence ID" value="ENSP00000406674.3"/>
    <property type="gene ID" value="ENSG00000124003.13"/>
</dbReference>
<dbReference type="GeneID" id="116255"/>
<dbReference type="KEGG" id="hsa:116255"/>
<dbReference type="MANE-Select" id="ENST00000446656.4">
    <property type="protein sequence ID" value="ENSP00000406674.3"/>
    <property type="RefSeq nucleotide sequence ID" value="NM_058165.3"/>
    <property type="RefSeq protein sequence ID" value="NP_477513.2"/>
</dbReference>
<dbReference type="UCSC" id="uc010fws.2">
    <property type="organism name" value="human"/>
</dbReference>
<dbReference type="AGR" id="HGNC:18210"/>
<dbReference type="CTD" id="116255"/>
<dbReference type="DisGeNET" id="116255"/>
<dbReference type="GeneCards" id="MOGAT1"/>
<dbReference type="HGNC" id="HGNC:18210">
    <property type="gene designation" value="MOGAT1"/>
</dbReference>
<dbReference type="HPA" id="ENSG00000124003">
    <property type="expression patterns" value="Tissue enriched (gallbladder)"/>
</dbReference>
<dbReference type="MIM" id="610268">
    <property type="type" value="gene"/>
</dbReference>
<dbReference type="neXtProt" id="NX_Q96PD6"/>
<dbReference type="OpenTargets" id="ENSG00000124003"/>
<dbReference type="PharmGKB" id="PA27305"/>
<dbReference type="VEuPathDB" id="HostDB:ENSG00000124003"/>
<dbReference type="eggNOG" id="KOG0831">
    <property type="taxonomic scope" value="Eukaryota"/>
</dbReference>
<dbReference type="GeneTree" id="ENSGT01030000234582"/>
<dbReference type="HOGENOM" id="CLU_023995_0_1_1"/>
<dbReference type="InParanoid" id="Q96PD6"/>
<dbReference type="OMA" id="WIKNWTL"/>
<dbReference type="OrthoDB" id="264532at2759"/>
<dbReference type="PAN-GO" id="Q96PD6">
    <property type="GO annotations" value="4 GO annotations based on evolutionary models"/>
</dbReference>
<dbReference type="PhylomeDB" id="Q96PD6"/>
<dbReference type="TreeFam" id="TF314707"/>
<dbReference type="BRENDA" id="2.3.1.22">
    <property type="organism ID" value="2681"/>
</dbReference>
<dbReference type="PathwayCommons" id="Q96PD6"/>
<dbReference type="Reactome" id="R-HSA-75109">
    <property type="pathway name" value="Triglyceride biosynthesis"/>
</dbReference>
<dbReference type="SignaLink" id="Q96PD6"/>
<dbReference type="UniPathway" id="UPA00282"/>
<dbReference type="BioGRID-ORCS" id="116255">
    <property type="hits" value="10 hits in 1149 CRISPR screens"/>
</dbReference>
<dbReference type="ChiTaRS" id="MOGAT1">
    <property type="organism name" value="human"/>
</dbReference>
<dbReference type="GenomeRNAi" id="116255"/>
<dbReference type="Pharos" id="Q96PD6">
    <property type="development level" value="Tbio"/>
</dbReference>
<dbReference type="PRO" id="PR:Q96PD6"/>
<dbReference type="Proteomes" id="UP000005640">
    <property type="component" value="Chromosome 2"/>
</dbReference>
<dbReference type="RNAct" id="Q96PD6">
    <property type="molecule type" value="protein"/>
</dbReference>
<dbReference type="Bgee" id="ENSG00000124003">
    <property type="expression patterns" value="Expressed in gall bladder and 72 other cell types or tissues"/>
</dbReference>
<dbReference type="GO" id="GO:0005789">
    <property type="term" value="C:endoplasmic reticulum membrane"/>
    <property type="evidence" value="ECO:0000318"/>
    <property type="project" value="GO_Central"/>
</dbReference>
<dbReference type="GO" id="GO:0003846">
    <property type="term" value="F:2-acylglycerol O-acyltransferase activity"/>
    <property type="evidence" value="ECO:0000304"/>
    <property type="project" value="Reactome"/>
</dbReference>
<dbReference type="GO" id="GO:0004144">
    <property type="term" value="F:diacylglycerol O-acyltransferase activity"/>
    <property type="evidence" value="ECO:0000318"/>
    <property type="project" value="GO_Central"/>
</dbReference>
<dbReference type="GO" id="GO:0006651">
    <property type="term" value="P:diacylglycerol biosynthetic process"/>
    <property type="evidence" value="ECO:0000318"/>
    <property type="project" value="GO_Central"/>
</dbReference>
<dbReference type="GO" id="GO:0006071">
    <property type="term" value="P:glycerol metabolic process"/>
    <property type="evidence" value="ECO:0007669"/>
    <property type="project" value="UniProtKB-KW"/>
</dbReference>
<dbReference type="GO" id="GO:0019432">
    <property type="term" value="P:triglyceride biosynthetic process"/>
    <property type="evidence" value="ECO:0000318"/>
    <property type="project" value="GO_Central"/>
</dbReference>
<dbReference type="CDD" id="cd07987">
    <property type="entry name" value="LPLAT_MGAT-like"/>
    <property type="match status" value="1"/>
</dbReference>
<dbReference type="InterPro" id="IPR007130">
    <property type="entry name" value="DAGAT"/>
</dbReference>
<dbReference type="PANTHER" id="PTHR12317:SF26">
    <property type="entry name" value="2-ACYLGLYCEROL O-ACYLTRANSFERASE 1"/>
    <property type="match status" value="1"/>
</dbReference>
<dbReference type="PANTHER" id="PTHR12317">
    <property type="entry name" value="DIACYLGLYCEROL O-ACYLTRANSFERASE"/>
    <property type="match status" value="1"/>
</dbReference>
<dbReference type="Pfam" id="PF03982">
    <property type="entry name" value="DAGAT"/>
    <property type="match status" value="1"/>
</dbReference>
<evidence type="ECO:0000250" key="1">
    <source>
        <dbReference type="UniProtKB" id="Q91ZV4"/>
    </source>
</evidence>
<evidence type="ECO:0000255" key="2"/>
<evidence type="ECO:0000269" key="3">
    <source>
    </source>
</evidence>
<evidence type="ECO:0000305" key="4"/>
<evidence type="ECO:0000312" key="5">
    <source>
        <dbReference type="HGNC" id="HGNC:18210"/>
    </source>
</evidence>
<organism>
    <name type="scientific">Homo sapiens</name>
    <name type="common">Human</name>
    <dbReference type="NCBI Taxonomy" id="9606"/>
    <lineage>
        <taxon>Eukaryota</taxon>
        <taxon>Metazoa</taxon>
        <taxon>Chordata</taxon>
        <taxon>Craniata</taxon>
        <taxon>Vertebrata</taxon>
        <taxon>Euteleostomi</taxon>
        <taxon>Mammalia</taxon>
        <taxon>Eutheria</taxon>
        <taxon>Euarchontoglires</taxon>
        <taxon>Primates</taxon>
        <taxon>Haplorrhini</taxon>
        <taxon>Catarrhini</taxon>
        <taxon>Hominidae</taxon>
        <taxon>Homo</taxon>
    </lineage>
</organism>
<proteinExistence type="evidence at transcript level"/>
<keyword id="KW-0012">Acyltransferase</keyword>
<keyword id="KW-0256">Endoplasmic reticulum</keyword>
<keyword id="KW-0319">Glycerol metabolism</keyword>
<keyword id="KW-0325">Glycoprotein</keyword>
<keyword id="KW-0444">Lipid biosynthesis</keyword>
<keyword id="KW-0443">Lipid metabolism</keyword>
<keyword id="KW-0472">Membrane</keyword>
<keyword id="KW-1185">Reference proteome</keyword>
<keyword id="KW-0808">Transferase</keyword>
<keyword id="KW-0812">Transmembrane</keyword>
<keyword id="KW-1133">Transmembrane helix</keyword>
<feature type="chain" id="PRO_0000249058" description="2-acylglycerol O-acyltransferase 1">
    <location>
        <begin position="1"/>
        <end position="335"/>
    </location>
</feature>
<feature type="transmembrane region" description="Helical" evidence="2">
    <location>
        <begin position="18"/>
        <end position="38"/>
    </location>
</feature>
<feature type="transmembrane region" description="Helical" evidence="2">
    <location>
        <begin position="40"/>
        <end position="60"/>
    </location>
</feature>
<feature type="transmembrane region" description="Helical" evidence="2">
    <location>
        <begin position="132"/>
        <end position="152"/>
    </location>
</feature>
<feature type="glycosylation site" description="N-linked (GlcNAc...) asparagine" evidence="2">
    <location>
        <position position="121"/>
    </location>
</feature>
<feature type="glycosylation site" description="N-linked (GlcNAc...) asparagine" evidence="2">
    <location>
        <position position="125"/>
    </location>
</feature>
<feature type="glycosylation site" description="N-linked (GlcNAc...) asparagine" evidence="2">
    <location>
        <position position="180"/>
    </location>
</feature>
<feature type="sequence variant" id="VAR_055695" description="In dbSNP:rs35959734.">
    <original>A</original>
    <variation>T</variation>
    <location>
        <position position="13"/>
    </location>
</feature>
<feature type="sequence variant" id="VAR_027389" description="In dbSNP:rs1868024.">
    <original>S</original>
    <variation>P</variation>
    <location>
        <position position="163"/>
    </location>
</feature>
<feature type="sequence conflict" description="In Ref. 1; AAK84178." evidence="4" ref="1">
    <original>KYLLL</original>
    <variation>SFLT</variation>
    <location>
        <begin position="27"/>
        <end position="31"/>
    </location>
</feature>
<accession>Q96PD6</accession>
<accession>Q6IEE5</accession>
<gene>
    <name evidence="5" type="primary">MOGAT1</name>
    <name type="synonym">DC2</name>
    <name type="synonym">DGAT2L1</name>
</gene>
<sequence length="335" mass="38812">MKVEFAPLNIQLARRLQTVAVLQWVLKYLLLGPMSIGITVMLIIHNYLFLYIPYLMWLYFDWHTPERGGRRSSWIKNWTLWKHFKDYFPIHLIKTQDLDPSHNYIFGFHPHGIMAVGAFGNFSVNYSDFKDLFPGFTSYLHVLPLWFWCPVFREYVMSVGLVSVSKKSVSYMVSKEGGGNISVIVLGGAKESLDAHPGKFTLFIRQRKGFVKIALTHGASLVPVVSFGENELFKQTDNPEGSWIRTVQNKLQKIMGFALPLFHARGVFQYNFGLMTYRKAIHTVVGRPIPVRQTLNPTQEQIEELHQTYMEELRKLFEEHKGKYGIPEHETLVLK</sequence>
<protein>
    <recommendedName>
        <fullName evidence="4">2-acylglycerol O-acyltransferase 1</fullName>
        <ecNumber evidence="1">2.3.1.22</ecNumber>
    </recommendedName>
    <alternativeName>
        <fullName>Acyl-CoA:monoacylglycerol acyltransferase 1</fullName>
        <shortName>MGAT1</shortName>
    </alternativeName>
    <alternativeName>
        <fullName>Diacylglycerol O-acyltransferase candidate 2</fullName>
        <shortName>hDC2</shortName>
    </alternativeName>
    <alternativeName>
        <fullName>Diacylglycerol acyltransferase 2-like protein 1</fullName>
    </alternativeName>
    <alternativeName>
        <fullName>Monoacylglycerol O-acyltransferase 1</fullName>
    </alternativeName>
</protein>
<name>MOGT1_HUMAN</name>
<reference key="1">
    <citation type="journal article" date="2001" name="J. Biol. Chem.">
        <title>Cloning of DGAT2, a second mammalian diacylglycerol acyltransferase, and related family members.</title>
        <authorList>
            <person name="Cases S."/>
            <person name="Stone S.J."/>
            <person name="Zhou P."/>
            <person name="Yen C.-L.E."/>
            <person name="Tow B."/>
            <person name="Lardizabal K.D."/>
            <person name="Voelker T."/>
            <person name="Farese R.V. Jr."/>
        </authorList>
    </citation>
    <scope>NUCLEOTIDE SEQUENCE [MRNA]</scope>
    <source>
        <tissue>Kidney</tissue>
    </source>
</reference>
<reference key="2">
    <citation type="journal article" date="2005" name="Nature">
        <title>Generation and annotation of the DNA sequences of human chromosomes 2 and 4.</title>
        <authorList>
            <person name="Hillier L.W."/>
            <person name="Graves T.A."/>
            <person name="Fulton R.S."/>
            <person name="Fulton L.A."/>
            <person name="Pepin K.H."/>
            <person name="Minx P."/>
            <person name="Wagner-McPherson C."/>
            <person name="Layman D."/>
            <person name="Wylie K."/>
            <person name="Sekhon M."/>
            <person name="Becker M.C."/>
            <person name="Fewell G.A."/>
            <person name="Delehaunty K.D."/>
            <person name="Miner T.L."/>
            <person name="Nash W.E."/>
            <person name="Kremitzki C."/>
            <person name="Oddy L."/>
            <person name="Du H."/>
            <person name="Sun H."/>
            <person name="Bradshaw-Cordum H."/>
            <person name="Ali J."/>
            <person name="Carter J."/>
            <person name="Cordes M."/>
            <person name="Harris A."/>
            <person name="Isak A."/>
            <person name="van Brunt A."/>
            <person name="Nguyen C."/>
            <person name="Du F."/>
            <person name="Courtney L."/>
            <person name="Kalicki J."/>
            <person name="Ozersky P."/>
            <person name="Abbott S."/>
            <person name="Armstrong J."/>
            <person name="Belter E.A."/>
            <person name="Caruso L."/>
            <person name="Cedroni M."/>
            <person name="Cotton M."/>
            <person name="Davidson T."/>
            <person name="Desai A."/>
            <person name="Elliott G."/>
            <person name="Erb T."/>
            <person name="Fronick C."/>
            <person name="Gaige T."/>
            <person name="Haakenson W."/>
            <person name="Haglund K."/>
            <person name="Holmes A."/>
            <person name="Harkins R."/>
            <person name="Kim K."/>
            <person name="Kruchowski S.S."/>
            <person name="Strong C.M."/>
            <person name="Grewal N."/>
            <person name="Goyea E."/>
            <person name="Hou S."/>
            <person name="Levy A."/>
            <person name="Martinka S."/>
            <person name="Mead K."/>
            <person name="McLellan M.D."/>
            <person name="Meyer R."/>
            <person name="Randall-Maher J."/>
            <person name="Tomlinson C."/>
            <person name="Dauphin-Kohlberg S."/>
            <person name="Kozlowicz-Reilly A."/>
            <person name="Shah N."/>
            <person name="Swearengen-Shahid S."/>
            <person name="Snider J."/>
            <person name="Strong J.T."/>
            <person name="Thompson J."/>
            <person name="Yoakum M."/>
            <person name="Leonard S."/>
            <person name="Pearman C."/>
            <person name="Trani L."/>
            <person name="Radionenko M."/>
            <person name="Waligorski J.E."/>
            <person name="Wang C."/>
            <person name="Rock S.M."/>
            <person name="Tin-Wollam A.-M."/>
            <person name="Maupin R."/>
            <person name="Latreille P."/>
            <person name="Wendl M.C."/>
            <person name="Yang S.-P."/>
            <person name="Pohl C."/>
            <person name="Wallis J.W."/>
            <person name="Spieth J."/>
            <person name="Bieri T.A."/>
            <person name="Berkowicz N."/>
            <person name="Nelson J.O."/>
            <person name="Osborne J."/>
            <person name="Ding L."/>
            <person name="Meyer R."/>
            <person name="Sabo A."/>
            <person name="Shotland Y."/>
            <person name="Sinha P."/>
            <person name="Wohldmann P.E."/>
            <person name="Cook L.L."/>
            <person name="Hickenbotham M.T."/>
            <person name="Eldred J."/>
            <person name="Williams D."/>
            <person name="Jones T.A."/>
            <person name="She X."/>
            <person name="Ciccarelli F.D."/>
            <person name="Izaurralde E."/>
            <person name="Taylor J."/>
            <person name="Schmutz J."/>
            <person name="Myers R.M."/>
            <person name="Cox D.R."/>
            <person name="Huang X."/>
            <person name="McPherson J.D."/>
            <person name="Mardis E.R."/>
            <person name="Clifton S.W."/>
            <person name="Warren W.C."/>
            <person name="Chinwalla A.T."/>
            <person name="Eddy S.R."/>
            <person name="Marra M.A."/>
            <person name="Ovcharenko I."/>
            <person name="Furey T.S."/>
            <person name="Miller W."/>
            <person name="Eichler E.E."/>
            <person name="Bork P."/>
            <person name="Suyama M."/>
            <person name="Torrents D."/>
            <person name="Waterston R.H."/>
            <person name="Wilson R.K."/>
        </authorList>
    </citation>
    <scope>NUCLEOTIDE SEQUENCE [LARGE SCALE GENOMIC DNA]</scope>
</reference>
<reference key="3">
    <citation type="journal article" date="2003" name="Cytogenet. Genome Res.">
        <title>Genomic organization of the DGAT2/MOGAT gene family in cattle (Bos taurus) and other mammals.</title>
        <authorList>
            <person name="Winter A."/>
            <person name="van Eckeveld M."/>
            <person name="Bininda-Emonds O.R.P."/>
            <person name="Habermann F.A."/>
            <person name="Fries R."/>
        </authorList>
    </citation>
    <scope>IDENTIFICATION</scope>
</reference>
<reference key="4">
    <citation type="journal article" date="2003" name="J. Biol. Chem.">
        <title>MGAT2, a monoacylglycerol acyltransferase expressed in the small intestine.</title>
        <authorList>
            <person name="Yen C.-L.E."/>
            <person name="Farese R.V. Jr."/>
        </authorList>
    </citation>
    <scope>TISSUE SPECIFICITY</scope>
    <source>
        <tissue>Intestine</tissue>
    </source>
</reference>
<comment type="function">
    <text evidence="1">Involved in glycerolipid synthesis and lipid metabolism. Catalyzes the formation of diacylglycerol, the precursor of triacylglycerol, by transferring the acyl chain of a fatty acyl-CoA to a monoacylglycerol, mainly at the sn-1 or sn-3 positions. It uses both sn-2-monoacylglycerol (2-acylglycerol) and sn-1-monoacylglycerol (1-acyl-sn-glycerol) equally well as substrates, and uses sn-3-monoacylglycerol (3-acyl-sn-glycerol) with lower efficiency. Probably not involved in absorption of dietary fat in the small intestine.</text>
</comment>
<comment type="catalytic activity">
    <reaction evidence="1">
        <text>a 2-acylglycerol + an acyl-CoA = a 1,2-diacylglycerol + CoA</text>
        <dbReference type="Rhea" id="RHEA:16741"/>
        <dbReference type="ChEBI" id="CHEBI:17389"/>
        <dbReference type="ChEBI" id="CHEBI:49172"/>
        <dbReference type="ChEBI" id="CHEBI:57287"/>
        <dbReference type="ChEBI" id="CHEBI:58342"/>
        <dbReference type="EC" id="2.3.1.22"/>
    </reaction>
    <physiologicalReaction direction="left-to-right" evidence="1">
        <dbReference type="Rhea" id="RHEA:16742"/>
    </physiologicalReaction>
</comment>
<comment type="catalytic activity">
    <reaction evidence="1">
        <text>2-(9Z-octadecenoyl)-glycerol + butanoyl-CoA = 1-butanoyl-2-(9Z-octadecenoyl)-glycerol + CoA</text>
        <dbReference type="Rhea" id="RHEA:77271"/>
        <dbReference type="ChEBI" id="CHEBI:57287"/>
        <dbReference type="ChEBI" id="CHEBI:57371"/>
        <dbReference type="ChEBI" id="CHEBI:73990"/>
        <dbReference type="ChEBI" id="CHEBI:197386"/>
    </reaction>
    <physiologicalReaction direction="left-to-right" evidence="1">
        <dbReference type="Rhea" id="RHEA:77272"/>
    </physiologicalReaction>
</comment>
<comment type="catalytic activity">
    <reaction evidence="1">
        <text>2-(9Z-octadecenoyl)-glycerol + octanoyl-CoA = 1-octanoyl-2-(9Z-octadecenoyl)-glycerol + CoA</text>
        <dbReference type="Rhea" id="RHEA:77539"/>
        <dbReference type="ChEBI" id="CHEBI:57287"/>
        <dbReference type="ChEBI" id="CHEBI:57386"/>
        <dbReference type="ChEBI" id="CHEBI:73990"/>
        <dbReference type="ChEBI" id="CHEBI:197391"/>
    </reaction>
    <physiologicalReaction direction="left-to-right" evidence="1">
        <dbReference type="Rhea" id="RHEA:77540"/>
    </physiologicalReaction>
</comment>
<comment type="catalytic activity">
    <reaction evidence="1">
        <text>2-(9Z-octadecenoyl)-glycerol + dodecanoyl-CoA = 1-dodecanoyl-2-(9Z-octadecenoyl)-glycerol + CoA</text>
        <dbReference type="Rhea" id="RHEA:77275"/>
        <dbReference type="ChEBI" id="CHEBI:57287"/>
        <dbReference type="ChEBI" id="CHEBI:57375"/>
        <dbReference type="ChEBI" id="CHEBI:73990"/>
        <dbReference type="ChEBI" id="CHEBI:75579"/>
    </reaction>
    <physiologicalReaction direction="left-to-right" evidence="1">
        <dbReference type="Rhea" id="RHEA:77276"/>
    </physiologicalReaction>
</comment>
<comment type="catalytic activity">
    <reaction evidence="1">
        <text>2-(9Z-octadecenoyl)-glycerol + tetradecanoyl-CoA = 1-tetradecanoyl-2-(9Z-octadecenoyl)-glycerol + CoA</text>
        <dbReference type="Rhea" id="RHEA:77279"/>
        <dbReference type="ChEBI" id="CHEBI:57287"/>
        <dbReference type="ChEBI" id="CHEBI:57385"/>
        <dbReference type="ChEBI" id="CHEBI:73990"/>
        <dbReference type="ChEBI" id="CHEBI:75582"/>
    </reaction>
    <physiologicalReaction direction="left-to-right" evidence="1">
        <dbReference type="Rhea" id="RHEA:77280"/>
    </physiologicalReaction>
</comment>
<comment type="catalytic activity">
    <reaction evidence="1">
        <text>2-(9Z-octadecenoyl)-glycerol + hexadecanoyl-CoA = 1-hexadecanoyl-2-(9Z-octadecenoyl)-glycerol + CoA</text>
        <dbReference type="Rhea" id="RHEA:77283"/>
        <dbReference type="ChEBI" id="CHEBI:57287"/>
        <dbReference type="ChEBI" id="CHEBI:57379"/>
        <dbReference type="ChEBI" id="CHEBI:73990"/>
        <dbReference type="ChEBI" id="CHEBI:75585"/>
    </reaction>
    <physiologicalReaction direction="left-to-right" evidence="1">
        <dbReference type="Rhea" id="RHEA:77284"/>
    </physiologicalReaction>
</comment>
<comment type="catalytic activity">
    <reaction evidence="1">
        <text>2-(9Z-octadecenoyl)-glycerol + octadecanoyl-CoA = 1-octadecanoyl-2-(9Z-octadecenoyl)-glycerol + CoA</text>
        <dbReference type="Rhea" id="RHEA:77287"/>
        <dbReference type="ChEBI" id="CHEBI:57287"/>
        <dbReference type="ChEBI" id="CHEBI:57394"/>
        <dbReference type="ChEBI" id="CHEBI:73990"/>
        <dbReference type="ChEBI" id="CHEBI:75590"/>
    </reaction>
    <physiologicalReaction direction="left-to-right" evidence="1">
        <dbReference type="Rhea" id="RHEA:77288"/>
    </physiologicalReaction>
</comment>
<comment type="catalytic activity">
    <reaction evidence="1">
        <text>eicosanoyl-CoA + 2-(9Z-octadecenoyl)-glycerol = 1-eicosanoyl-2-(9Z-octadecenoyl)-glycerol + CoA</text>
        <dbReference type="Rhea" id="RHEA:77543"/>
        <dbReference type="ChEBI" id="CHEBI:57287"/>
        <dbReference type="ChEBI" id="CHEBI:57380"/>
        <dbReference type="ChEBI" id="CHEBI:73990"/>
        <dbReference type="ChEBI" id="CHEBI:197392"/>
    </reaction>
    <physiologicalReaction direction="left-to-right" evidence="1">
        <dbReference type="Rhea" id="RHEA:77544"/>
    </physiologicalReaction>
</comment>
<comment type="catalytic activity">
    <reaction evidence="1">
        <text>2-(9Z-octadecenoyl)-glycerol + (9Z)-octadecenoyl-CoA = 1,2-di-(9Z-octadecenoyl)-glycerol + CoA</text>
        <dbReference type="Rhea" id="RHEA:39951"/>
        <dbReference type="ChEBI" id="CHEBI:52323"/>
        <dbReference type="ChEBI" id="CHEBI:57287"/>
        <dbReference type="ChEBI" id="CHEBI:57387"/>
        <dbReference type="ChEBI" id="CHEBI:73990"/>
    </reaction>
    <physiologicalReaction direction="left-to-right" evidence="1">
        <dbReference type="Rhea" id="RHEA:39952"/>
    </physiologicalReaction>
</comment>
<comment type="catalytic activity">
    <reaction evidence="1">
        <text>2-(9Z-octadecenoyl)-glycerol + (9Z,12Z)-octadecadienoyl-CoA = 1-(9Z,12Z-octadecadienoyl)-2-(9Z-octadecenoyl)-glycerol + CoA</text>
        <dbReference type="Rhea" id="RHEA:77291"/>
        <dbReference type="ChEBI" id="CHEBI:57287"/>
        <dbReference type="ChEBI" id="CHEBI:57383"/>
        <dbReference type="ChEBI" id="CHEBI:73990"/>
        <dbReference type="ChEBI" id="CHEBI:75614"/>
    </reaction>
    <physiologicalReaction direction="left-to-right" evidence="1">
        <dbReference type="Rhea" id="RHEA:77292"/>
    </physiologicalReaction>
</comment>
<comment type="catalytic activity">
    <reaction evidence="1">
        <text>2-(9Z-octadecenoyl)-glycerol + (5Z,8Z,11Z,14Z)-eicosatetraenoyl-CoA = 1-(5Z,8Z,11Z,14Z-eicosatetraenoyl)-2-(9Z-octadecenoyl)-glycerol + CoA</text>
        <dbReference type="Rhea" id="RHEA:77547"/>
        <dbReference type="ChEBI" id="CHEBI:57287"/>
        <dbReference type="ChEBI" id="CHEBI:57368"/>
        <dbReference type="ChEBI" id="CHEBI:73990"/>
        <dbReference type="ChEBI" id="CHEBI:75611"/>
    </reaction>
    <physiologicalReaction direction="left-to-right" evidence="1">
        <dbReference type="Rhea" id="RHEA:77548"/>
    </physiologicalReaction>
</comment>
<comment type="catalytic activity">
    <reaction evidence="1">
        <text>a 2-acylglycerol + an acyl-CoA = a 1,2-diacyl-sn-glycerol + CoA</text>
        <dbReference type="Rhea" id="RHEA:32947"/>
        <dbReference type="ChEBI" id="CHEBI:17389"/>
        <dbReference type="ChEBI" id="CHEBI:17815"/>
        <dbReference type="ChEBI" id="CHEBI:57287"/>
        <dbReference type="ChEBI" id="CHEBI:58342"/>
    </reaction>
    <physiologicalReaction direction="left-to-right" evidence="1">
        <dbReference type="Rhea" id="RHEA:32948"/>
    </physiologicalReaction>
</comment>
<comment type="catalytic activity">
    <reaction evidence="1">
        <text>a 2-acylglycerol + an acyl-CoA = a 2,3-diacyl-sn-glycerol + CoA</text>
        <dbReference type="Rhea" id="RHEA:38467"/>
        <dbReference type="ChEBI" id="CHEBI:17389"/>
        <dbReference type="ChEBI" id="CHEBI:57287"/>
        <dbReference type="ChEBI" id="CHEBI:58342"/>
        <dbReference type="ChEBI" id="CHEBI:75524"/>
    </reaction>
    <physiologicalReaction direction="left-to-right" evidence="1">
        <dbReference type="Rhea" id="RHEA:38468"/>
    </physiologicalReaction>
</comment>
<comment type="catalytic activity">
    <reaction evidence="1">
        <text>a 1-acylglycerol + an acyl-CoA = a 1,2-diacylglycerol + CoA</text>
        <dbReference type="Rhea" id="RHEA:39943"/>
        <dbReference type="ChEBI" id="CHEBI:35759"/>
        <dbReference type="ChEBI" id="CHEBI:49172"/>
        <dbReference type="ChEBI" id="CHEBI:57287"/>
        <dbReference type="ChEBI" id="CHEBI:58342"/>
    </reaction>
    <physiologicalReaction direction="left-to-right" evidence="1">
        <dbReference type="Rhea" id="RHEA:39944"/>
    </physiologicalReaction>
</comment>
<comment type="catalytic activity">
    <reaction evidence="1">
        <text>1-dodecanoylglycerol + (9Z)-octadecenoyl-CoA = 1-dodecanoyl-2-(9Z-octadecenoyl)-glycerol + CoA</text>
        <dbReference type="Rhea" id="RHEA:38115"/>
        <dbReference type="ChEBI" id="CHEBI:57287"/>
        <dbReference type="ChEBI" id="CHEBI:57387"/>
        <dbReference type="ChEBI" id="CHEBI:75539"/>
        <dbReference type="ChEBI" id="CHEBI:75579"/>
    </reaction>
    <physiologicalReaction direction="left-to-right" evidence="1">
        <dbReference type="Rhea" id="RHEA:38116"/>
    </physiologicalReaction>
</comment>
<comment type="catalytic activity">
    <reaction evidence="1">
        <text>1-tetradecanoylglycerol + (9Z)-octadecenoyl-CoA = 1-tetradecanoyl-2-(9Z-octadecenoyl)-glycerol + CoA</text>
        <dbReference type="Rhea" id="RHEA:38119"/>
        <dbReference type="ChEBI" id="CHEBI:57287"/>
        <dbReference type="ChEBI" id="CHEBI:57387"/>
        <dbReference type="ChEBI" id="CHEBI:75562"/>
        <dbReference type="ChEBI" id="CHEBI:75582"/>
    </reaction>
    <physiologicalReaction direction="left-to-right" evidence="1">
        <dbReference type="Rhea" id="RHEA:38120"/>
    </physiologicalReaction>
</comment>
<comment type="catalytic activity">
    <reaction evidence="1">
        <text>1-hexadecanoylglycerol + (9Z)-octadecenoyl-CoA = 1-hexadecanoyl-2-(9Z-octadecenoyl)-glycerol + CoA</text>
        <dbReference type="Rhea" id="RHEA:38123"/>
        <dbReference type="ChEBI" id="CHEBI:57287"/>
        <dbReference type="ChEBI" id="CHEBI:57387"/>
        <dbReference type="ChEBI" id="CHEBI:69081"/>
        <dbReference type="ChEBI" id="CHEBI:75585"/>
    </reaction>
    <physiologicalReaction direction="left-to-right" evidence="1">
        <dbReference type="Rhea" id="RHEA:38124"/>
    </physiologicalReaction>
</comment>
<comment type="catalytic activity">
    <reaction evidence="1">
        <text>1-(9Z-octadecenoyl)-glycerol + (9Z)-octadecenoyl-CoA = 1,2-di-(9Z-octadecenoyl)-glycerol + CoA</text>
        <dbReference type="Rhea" id="RHEA:37915"/>
        <dbReference type="ChEBI" id="CHEBI:52323"/>
        <dbReference type="ChEBI" id="CHEBI:57287"/>
        <dbReference type="ChEBI" id="CHEBI:57387"/>
        <dbReference type="ChEBI" id="CHEBI:75342"/>
    </reaction>
    <physiologicalReaction direction="left-to-right" evidence="1">
        <dbReference type="Rhea" id="RHEA:37916"/>
    </physiologicalReaction>
</comment>
<comment type="catalytic activity">
    <reaction evidence="1">
        <text>1-(9Z,12Z-octadecadienoyl)-glycerol + (9Z)-octadecenoyl-CoA = 1-(9Z,12Z-octadecadienoyl)-2-(9Z-octadecenoyl)-glycerol + CoA</text>
        <dbReference type="Rhea" id="RHEA:38131"/>
        <dbReference type="ChEBI" id="CHEBI:57287"/>
        <dbReference type="ChEBI" id="CHEBI:57387"/>
        <dbReference type="ChEBI" id="CHEBI:75568"/>
        <dbReference type="ChEBI" id="CHEBI:75614"/>
    </reaction>
    <physiologicalReaction direction="left-to-right" evidence="1">
        <dbReference type="Rhea" id="RHEA:38132"/>
    </physiologicalReaction>
</comment>
<comment type="catalytic activity">
    <reaction evidence="1">
        <text>1-(9Z,12Z,15Z-octadecatrienoyl)-glycerol + (9Z)-octadecenoyl-CoA = 1-(9Z,12Z,15Z-octadecatrienoyl)-2-(9Z-octadecenoyl)-glycerol + CoA</text>
        <dbReference type="Rhea" id="RHEA:38135"/>
        <dbReference type="ChEBI" id="CHEBI:57287"/>
        <dbReference type="ChEBI" id="CHEBI:57387"/>
        <dbReference type="ChEBI" id="CHEBI:75609"/>
        <dbReference type="ChEBI" id="CHEBI:75610"/>
    </reaction>
    <physiologicalReaction direction="left-to-right" evidence="1">
        <dbReference type="Rhea" id="RHEA:38136"/>
    </physiologicalReaction>
</comment>
<comment type="catalytic activity">
    <reaction evidence="1">
        <text>1-(5Z,8Z,11Z,14Z-eicosatetraenoyl)-glycerol + (9Z)-octadecenoyl-CoA = 1-(5Z,8Z,11Z,14Z-eicosatetraenoyl)-2-(9Z-octadecenoyl)-glycerol + CoA</text>
        <dbReference type="Rhea" id="RHEA:38139"/>
        <dbReference type="ChEBI" id="CHEBI:57287"/>
        <dbReference type="ChEBI" id="CHEBI:57387"/>
        <dbReference type="ChEBI" id="CHEBI:75611"/>
        <dbReference type="ChEBI" id="CHEBI:75612"/>
    </reaction>
    <physiologicalReaction direction="left-to-right" evidence="1">
        <dbReference type="Rhea" id="RHEA:38140"/>
    </physiologicalReaction>
</comment>
<comment type="catalytic activity">
    <reaction evidence="1">
        <text>a 1-acylglycerol + an acyl-CoA = a 1,3-diacylglycerol + CoA</text>
        <dbReference type="Rhea" id="RHEA:77571"/>
        <dbReference type="ChEBI" id="CHEBI:35759"/>
        <dbReference type="ChEBI" id="CHEBI:47777"/>
        <dbReference type="ChEBI" id="CHEBI:57287"/>
        <dbReference type="ChEBI" id="CHEBI:58342"/>
    </reaction>
    <physiologicalReaction direction="left-to-right" evidence="1">
        <dbReference type="Rhea" id="RHEA:77572"/>
    </physiologicalReaction>
</comment>
<comment type="catalytic activity">
    <reaction evidence="1">
        <text>1-dodecanoylglycerol + (9Z)-octadecenoyl-CoA = 1-dodecanoyl-3-(9Z-octadecenoyl)-glycerol + CoA</text>
        <dbReference type="Rhea" id="RHEA:77587"/>
        <dbReference type="ChEBI" id="CHEBI:57287"/>
        <dbReference type="ChEBI" id="CHEBI:57387"/>
        <dbReference type="ChEBI" id="CHEBI:75539"/>
        <dbReference type="ChEBI" id="CHEBI:197406"/>
    </reaction>
    <physiologicalReaction direction="left-to-right" evidence="1">
        <dbReference type="Rhea" id="RHEA:77588"/>
    </physiologicalReaction>
</comment>
<comment type="catalytic activity">
    <reaction evidence="1">
        <text>1-hexadecanoylglycerol + (9Z)-octadecenoyl-CoA = 1-(9Z-octadecenoyl)-3-hexadecanoylglycerol + CoA</text>
        <dbReference type="Rhea" id="RHEA:77563"/>
        <dbReference type="ChEBI" id="CHEBI:57287"/>
        <dbReference type="ChEBI" id="CHEBI:57387"/>
        <dbReference type="ChEBI" id="CHEBI:69081"/>
        <dbReference type="ChEBI" id="CHEBI:75869"/>
    </reaction>
    <physiologicalReaction direction="left-to-right" evidence="1">
        <dbReference type="Rhea" id="RHEA:77564"/>
    </physiologicalReaction>
</comment>
<comment type="catalytic activity">
    <reaction evidence="1">
        <text>1-octadecanoylglycerol + (9Z)-octadecenoyl-CoA = 1-octadecanoyl-3-(9Z-octadecenoyl)-glycerol + CoA</text>
        <dbReference type="Rhea" id="RHEA:77583"/>
        <dbReference type="ChEBI" id="CHEBI:57287"/>
        <dbReference type="ChEBI" id="CHEBI:57387"/>
        <dbReference type="ChEBI" id="CHEBI:75555"/>
        <dbReference type="ChEBI" id="CHEBI:197407"/>
    </reaction>
    <physiologicalReaction direction="left-to-right" evidence="1">
        <dbReference type="Rhea" id="RHEA:77584"/>
    </physiologicalReaction>
</comment>
<comment type="catalytic activity">
    <reaction evidence="1">
        <text>1-(9Z-octadecenoyl)-sn-glycerol + (9Z)-octadecenoyl-CoA = 1,3-di-(9Z-octadecenoyl)-glycerol + CoA</text>
        <dbReference type="Rhea" id="RHEA:77267"/>
        <dbReference type="ChEBI" id="CHEBI:57287"/>
        <dbReference type="ChEBI" id="CHEBI:57387"/>
        <dbReference type="ChEBI" id="CHEBI:75735"/>
        <dbReference type="ChEBI" id="CHEBI:75757"/>
    </reaction>
    <physiologicalReaction direction="left-to-right" evidence="1">
        <dbReference type="Rhea" id="RHEA:77268"/>
    </physiologicalReaction>
</comment>
<comment type="catalytic activity">
    <reaction evidence="1">
        <text>1-(9Z,12Z-octadecadienoyl)-glycerol + (9Z)-octadecenoyl-CoA = 1-(9Z-octadecenoyl)-3-(9Z,12Z-octadecadienoyl)-glycerol + CoA</text>
        <dbReference type="Rhea" id="RHEA:77591"/>
        <dbReference type="ChEBI" id="CHEBI:57287"/>
        <dbReference type="ChEBI" id="CHEBI:57387"/>
        <dbReference type="ChEBI" id="CHEBI:75568"/>
        <dbReference type="ChEBI" id="CHEBI:133484"/>
    </reaction>
    <physiologicalReaction direction="left-to-right" evidence="1">
        <dbReference type="Rhea" id="RHEA:77592"/>
    </physiologicalReaction>
</comment>
<comment type="catalytic activity">
    <reaction evidence="1">
        <text>1-(9Z,12Z,15Z-octadecatrienoyl)-glycerol + (9Z)-octadecenoyl-CoA = 1-(9Z,12Z,15Z-octadecatrienoyl)-3-(9Z-octadecenoyl)-glycerol + CoA</text>
        <dbReference type="Rhea" id="RHEA:77595"/>
        <dbReference type="ChEBI" id="CHEBI:57287"/>
        <dbReference type="ChEBI" id="CHEBI:57387"/>
        <dbReference type="ChEBI" id="CHEBI:75610"/>
        <dbReference type="ChEBI" id="CHEBI:197408"/>
    </reaction>
    <physiologicalReaction direction="left-to-right" evidence="1">
        <dbReference type="Rhea" id="RHEA:77596"/>
    </physiologicalReaction>
</comment>
<comment type="catalytic activity">
    <reaction evidence="1">
        <text>a 1-acyl-sn-glycerol + an acyl-CoA = a 1,3-diacyl-sn-glycerol + CoA</text>
        <dbReference type="Rhea" id="RHEA:77559"/>
        <dbReference type="ChEBI" id="CHEBI:57287"/>
        <dbReference type="ChEBI" id="CHEBI:58342"/>
        <dbReference type="ChEBI" id="CHEBI:64683"/>
        <dbReference type="ChEBI" id="CHEBI:77272"/>
    </reaction>
    <physiologicalReaction direction="left-to-right" evidence="1">
        <dbReference type="Rhea" id="RHEA:77560"/>
    </physiologicalReaction>
</comment>
<comment type="catalytic activity">
    <reaction evidence="1">
        <text>a 3-acyl-sn-glycerol + an acyl-CoA = a 1,3-diacyl-sn-glycerol + CoA</text>
        <dbReference type="Rhea" id="RHEA:77555"/>
        <dbReference type="ChEBI" id="CHEBI:57287"/>
        <dbReference type="ChEBI" id="CHEBI:58342"/>
        <dbReference type="ChEBI" id="CHEBI:64760"/>
        <dbReference type="ChEBI" id="CHEBI:77272"/>
    </reaction>
    <physiologicalReaction direction="left-to-right" evidence="1">
        <dbReference type="Rhea" id="RHEA:77556"/>
    </physiologicalReaction>
</comment>
<comment type="catalytic activity">
    <reaction evidence="1">
        <text>3-octadecanoyl-sn-glycerol + (9Z)-octadecenoyl-CoA = 1-(9Z-octadecenoyl)-3-octadecanoyl-sn-glycerol + CoA</text>
        <dbReference type="Rhea" id="RHEA:77551"/>
        <dbReference type="ChEBI" id="CHEBI:57287"/>
        <dbReference type="ChEBI" id="CHEBI:57387"/>
        <dbReference type="ChEBI" id="CHEBI:75553"/>
        <dbReference type="ChEBI" id="CHEBI:197404"/>
    </reaction>
    <physiologicalReaction direction="left-to-right" evidence="1">
        <dbReference type="Rhea" id="RHEA:77552"/>
    </physiologicalReaction>
</comment>
<comment type="pathway">
    <text evidence="1">Glycerolipid metabolism; triacylglycerol biosynthesis.</text>
</comment>
<comment type="subcellular location">
    <subcellularLocation>
        <location evidence="1">Endoplasmic reticulum membrane</location>
        <topology evidence="1">Multi-pass membrane protein</topology>
    </subcellularLocation>
</comment>
<comment type="tissue specificity">
    <text evidence="3">Expressed in stomach and liver.</text>
</comment>
<comment type="similarity">
    <text evidence="4">Belongs to the diacylglycerol acyltransferase family.</text>
</comment>
<comment type="sequence caution" evidence="4">
    <conflict type="erroneous gene model prediction">
        <sequence resource="EMBL-CDS" id="AAX81987"/>
    </conflict>
</comment>